<dbReference type="EMBL" id="S60150">
    <property type="protein sequence ID" value="AAB20079.1"/>
    <property type="molecule type" value="Genomic_RNA"/>
</dbReference>
<dbReference type="PIR" id="JQ1249">
    <property type="entry name" value="JQ1249"/>
</dbReference>
<dbReference type="GO" id="GO:0044167">
    <property type="term" value="C:host cell endoplasmic reticulum membrane"/>
    <property type="evidence" value="ECO:0007669"/>
    <property type="project" value="UniProtKB-SubCell"/>
</dbReference>
<dbReference type="GO" id="GO:0016020">
    <property type="term" value="C:membrane"/>
    <property type="evidence" value="ECO:0007669"/>
    <property type="project" value="UniProtKB-KW"/>
</dbReference>
<dbReference type="GO" id="GO:0046740">
    <property type="term" value="P:transport of virus in host, cell to cell"/>
    <property type="evidence" value="ECO:0007669"/>
    <property type="project" value="UniProtKB-KW"/>
</dbReference>
<dbReference type="InterPro" id="IPR003411">
    <property type="entry name" value="TGBp3"/>
</dbReference>
<dbReference type="Pfam" id="PF02495">
    <property type="entry name" value="TGBp3"/>
    <property type="match status" value="1"/>
</dbReference>
<accession>P37990</accession>
<organismHost>
    <name type="scientific">Chrysanthemum morifolium</name>
    <name type="common">Florist's daisy</name>
    <name type="synonym">Dendranthema grandiflorum</name>
    <dbReference type="NCBI Taxonomy" id="41568"/>
</organismHost>
<organismHost>
    <name type="scientific">Gynura</name>
    <dbReference type="NCBI Taxonomy" id="109564"/>
</organismHost>
<protein>
    <recommendedName>
        <fullName>Movement protein TGBp3</fullName>
    </recommendedName>
    <alternativeName>
        <fullName>7 kDa protein</fullName>
    </alternativeName>
    <alternativeName>
        <fullName>Triple gene block 3 protein</fullName>
        <shortName>TGBp3</shortName>
    </alternativeName>
</protein>
<gene>
    <name type="ORF">ORF4</name>
</gene>
<keyword id="KW-1038">Host endoplasmic reticulum</keyword>
<keyword id="KW-1043">Host membrane</keyword>
<keyword id="KW-0472">Membrane</keyword>
<keyword id="KW-0812">Transmembrane</keyword>
<keyword id="KW-1133">Transmembrane helix</keyword>
<keyword id="KW-0813">Transport</keyword>
<keyword id="KW-0916">Viral movement protein</keyword>
<sequence>MSLSYLDLLLAFGCVLAVSVIVNCFLVSHNNCVIEITGEAVRISGCTFDRTFVELVKGLKPARH</sequence>
<proteinExistence type="inferred from homology"/>
<reference key="1">
    <citation type="journal article" date="1991" name="J. Gen. Virol.">
        <title>Nucleotide sequence and gene organization of the 3'-terminal region of chrysanthemum virus B genomic RNA.</title>
        <authorList>
            <person name="Levay K."/>
            <person name="Zavriev S."/>
        </authorList>
    </citation>
    <scope>NUCLEOTIDE SEQUENCE [GENOMIC RNA]</scope>
</reference>
<comment type="function">
    <text evidence="1">Plays a role in viral cell-to-cell propagation, by facilitating genome transport to neighboring plant cells through plasmosdesmata. May induce the formation of granular vesicles derived from the Endoplasmic reticulum, which align on actin filaments (By similarity).</text>
</comment>
<comment type="subcellular location">
    <subcellularLocation>
        <location evidence="1">Host endoplasmic reticulum membrane</location>
    </subcellularLocation>
</comment>
<comment type="miscellaneous">
    <text>TGBp1, TGBp2 and TGBp3 seem to act together for cell-to-cell propagation. TGBp1 is the main movement protein that physically cross the plasmodesma with the viral genome. TGBp2 and TGBp3 would facilitate TGBp1 function.</text>
</comment>
<comment type="similarity">
    <text evidence="3">Belongs to the Tymovirales TGBp3 protein family.</text>
</comment>
<organism>
    <name type="scientific">Chrysanthemum virus B</name>
    <name type="common">CVB</name>
    <dbReference type="NCBI Taxonomy" id="12165"/>
    <lineage>
        <taxon>Viruses</taxon>
        <taxon>Riboviria</taxon>
        <taxon>Orthornavirae</taxon>
        <taxon>Kitrinoviricota</taxon>
        <taxon>Alsuviricetes</taxon>
        <taxon>Tymovirales</taxon>
        <taxon>Betaflexiviridae</taxon>
        <taxon>Quinvirinae</taxon>
        <taxon>Carlavirus</taxon>
    </lineage>
</organism>
<evidence type="ECO:0000250" key="1"/>
<evidence type="ECO:0000255" key="2"/>
<evidence type="ECO:0000305" key="3"/>
<name>TGB3_CVB</name>
<feature type="chain" id="PRO_0000222612" description="Movement protein TGBp3">
    <location>
        <begin position="1"/>
        <end position="64"/>
    </location>
</feature>
<feature type="topological domain" description="Lumenal" evidence="2">
    <location>
        <begin position="1"/>
        <end position="7"/>
    </location>
</feature>
<feature type="transmembrane region" description="Helical" evidence="2">
    <location>
        <begin position="8"/>
        <end position="28"/>
    </location>
</feature>
<feature type="topological domain" description="Cytoplasmic" evidence="2">
    <location>
        <begin position="29"/>
        <end position="64"/>
    </location>
</feature>